<comment type="function">
    <text evidence="1 6">Transmembrane protein which is abundantly expressed in interneurons, where it may regulate inhibitory synapse development (PubMed:23751499). May mediate homophilic cell adhesion (By similarity).</text>
</comment>
<comment type="subunit">
    <text evidence="6">Found in a complex with MAGI2 and NLGN2, where it interacts with MAGI2 (via PDZ 5 and PDZ 6 domains).</text>
</comment>
<comment type="subcellular location">
    <subcellularLocation>
        <location evidence="6">Postsynaptic cell membrane</location>
        <topology evidence="2">Single-pass membrane protein</topology>
    </subcellularLocation>
    <subcellularLocation>
        <location evidence="6">Postsynaptic density</location>
    </subcellularLocation>
</comment>
<comment type="tissue specificity">
    <text evidence="6">Detected primarily in brain, including cortex, hippocampus, cerebellum and striatum. Largely restricted to inhibitory GABAergic interneurons (at protein level).</text>
</comment>
<comment type="developmental stage">
    <text evidence="6">Expression in brain gradually increases from postnatal day 1 onwards and reaches maximum levels by postnatal week 3.</text>
</comment>
<comment type="PTM">
    <text evidence="6">N-glycosylated and sialylated. Not significantly O-glycosylated.</text>
</comment>
<comment type="similarity">
    <text evidence="7">Belongs to the immunoglobulin superfamily. Turtle family.</text>
</comment>
<gene>
    <name evidence="9" type="primary">Igsf9b</name>
</gene>
<proteinExistence type="evidence at protein level"/>
<name>TUTLB_RAT</name>
<dbReference type="EMBL" id="AABR07069538">
    <property type="status" value="NOT_ANNOTATED_CDS"/>
    <property type="molecule type" value="Genomic_DNA"/>
</dbReference>
<dbReference type="SMR" id="D3ZB51"/>
<dbReference type="CORUM" id="D3ZB51"/>
<dbReference type="FunCoup" id="D3ZB51">
    <property type="interactions" value="595"/>
</dbReference>
<dbReference type="STRING" id="10116.ENSRNOP00000012391"/>
<dbReference type="GlyCosmos" id="D3ZB51">
    <property type="glycosylation" value="3 sites, No reported glycans"/>
</dbReference>
<dbReference type="GlyGen" id="D3ZB51">
    <property type="glycosylation" value="3 sites"/>
</dbReference>
<dbReference type="iPTMnet" id="D3ZB51"/>
<dbReference type="PhosphoSitePlus" id="D3ZB51"/>
<dbReference type="PaxDb" id="10116-ENSRNOP00000012391"/>
<dbReference type="UCSC" id="RGD:1564717">
    <property type="organism name" value="rat"/>
</dbReference>
<dbReference type="AGR" id="RGD:1564717"/>
<dbReference type="RGD" id="1564717">
    <property type="gene designation" value="Igsf9b"/>
</dbReference>
<dbReference type="VEuPathDB" id="HostDB:ENSRNOG00000009253"/>
<dbReference type="eggNOG" id="KOG2408">
    <property type="taxonomic scope" value="Eukaryota"/>
</dbReference>
<dbReference type="eggNOG" id="KOG3510">
    <property type="taxonomic scope" value="Eukaryota"/>
</dbReference>
<dbReference type="HOGENOM" id="CLU_008169_0_0_1"/>
<dbReference type="InParanoid" id="D3ZB51"/>
<dbReference type="PhylomeDB" id="D3ZB51"/>
<dbReference type="TreeFam" id="TF326128"/>
<dbReference type="PRO" id="PR:D3ZB51"/>
<dbReference type="Proteomes" id="UP000002494">
    <property type="component" value="Chromosome 8"/>
</dbReference>
<dbReference type="Bgee" id="ENSRNOG00000009253">
    <property type="expression patterns" value="Expressed in frontal cortex and 9 other cell types or tissues"/>
</dbReference>
<dbReference type="GO" id="GO:0030425">
    <property type="term" value="C:dendrite"/>
    <property type="evidence" value="ECO:0000266"/>
    <property type="project" value="RGD"/>
</dbReference>
<dbReference type="GO" id="GO:0098982">
    <property type="term" value="C:GABA-ergic synapse"/>
    <property type="evidence" value="ECO:0000314"/>
    <property type="project" value="SynGO"/>
</dbReference>
<dbReference type="GO" id="GO:0060077">
    <property type="term" value="C:inhibitory synapse"/>
    <property type="evidence" value="ECO:0000266"/>
    <property type="project" value="RGD"/>
</dbReference>
<dbReference type="GO" id="GO:0043005">
    <property type="term" value="C:neuron projection"/>
    <property type="evidence" value="ECO:0000318"/>
    <property type="project" value="GO_Central"/>
</dbReference>
<dbReference type="GO" id="GO:0043025">
    <property type="term" value="C:neuronal cell body"/>
    <property type="evidence" value="ECO:0000266"/>
    <property type="project" value="RGD"/>
</dbReference>
<dbReference type="GO" id="GO:0014069">
    <property type="term" value="C:postsynaptic density"/>
    <property type="evidence" value="ECO:0007669"/>
    <property type="project" value="UniProtKB-SubCell"/>
</dbReference>
<dbReference type="GO" id="GO:0045211">
    <property type="term" value="C:postsynaptic membrane"/>
    <property type="evidence" value="ECO:0007669"/>
    <property type="project" value="UniProtKB-SubCell"/>
</dbReference>
<dbReference type="GO" id="GO:0099629">
    <property type="term" value="C:postsynaptic specialization of symmetric synapse"/>
    <property type="evidence" value="ECO:0000314"/>
    <property type="project" value="SynGO"/>
</dbReference>
<dbReference type="GO" id="GO:0019900">
    <property type="term" value="F:kinase binding"/>
    <property type="evidence" value="ECO:0000266"/>
    <property type="project" value="RGD"/>
</dbReference>
<dbReference type="GO" id="GO:0007156">
    <property type="term" value="P:homophilic cell adhesion via plasma membrane adhesion molecules"/>
    <property type="evidence" value="ECO:0000266"/>
    <property type="project" value="RGD"/>
</dbReference>
<dbReference type="GO" id="GO:0007399">
    <property type="term" value="P:nervous system development"/>
    <property type="evidence" value="ECO:0007669"/>
    <property type="project" value="UniProtKB-KW"/>
</dbReference>
<dbReference type="GO" id="GO:0097151">
    <property type="term" value="P:positive regulation of inhibitory postsynaptic potential"/>
    <property type="evidence" value="ECO:0000266"/>
    <property type="project" value="RGD"/>
</dbReference>
<dbReference type="GO" id="GO:0099560">
    <property type="term" value="P:synaptic membrane adhesion"/>
    <property type="evidence" value="ECO:0000266"/>
    <property type="project" value="RGD"/>
</dbReference>
<dbReference type="CDD" id="cd00063">
    <property type="entry name" value="FN3"/>
    <property type="match status" value="2"/>
</dbReference>
<dbReference type="CDD" id="cd00096">
    <property type="entry name" value="Ig"/>
    <property type="match status" value="2"/>
</dbReference>
<dbReference type="FunFam" id="2.60.40.10:FF:000272">
    <property type="entry name" value="Immunoglobulin superfamily member 9B"/>
    <property type="match status" value="1"/>
</dbReference>
<dbReference type="FunFam" id="2.60.40.10:FF:000323">
    <property type="entry name" value="Immunoglobulin superfamily member 9B"/>
    <property type="match status" value="1"/>
</dbReference>
<dbReference type="FunFam" id="2.60.40.10:FF:000389">
    <property type="entry name" value="Immunoglobulin superfamily member 9B"/>
    <property type="match status" value="1"/>
</dbReference>
<dbReference type="FunFam" id="2.60.40.10:FF:000531">
    <property type="entry name" value="Immunoglobulin superfamily member 9B"/>
    <property type="match status" value="1"/>
</dbReference>
<dbReference type="FunFam" id="2.60.40.10:FF:000226">
    <property type="entry name" value="protein turtle homolog B"/>
    <property type="match status" value="1"/>
</dbReference>
<dbReference type="FunFam" id="2.60.40.10:FF:000245">
    <property type="entry name" value="protein turtle homolog B isoform X2"/>
    <property type="match status" value="1"/>
</dbReference>
<dbReference type="FunFam" id="2.60.40.10:FF:000321">
    <property type="entry name" value="protein turtle homolog B isoform X2"/>
    <property type="match status" value="1"/>
</dbReference>
<dbReference type="Gene3D" id="2.60.40.10">
    <property type="entry name" value="Immunoglobulins"/>
    <property type="match status" value="7"/>
</dbReference>
<dbReference type="InterPro" id="IPR003961">
    <property type="entry name" value="FN3_dom"/>
</dbReference>
<dbReference type="InterPro" id="IPR036116">
    <property type="entry name" value="FN3_sf"/>
</dbReference>
<dbReference type="InterPro" id="IPR007110">
    <property type="entry name" value="Ig-like_dom"/>
</dbReference>
<dbReference type="InterPro" id="IPR036179">
    <property type="entry name" value="Ig-like_dom_sf"/>
</dbReference>
<dbReference type="InterPro" id="IPR013783">
    <property type="entry name" value="Ig-like_fold"/>
</dbReference>
<dbReference type="InterPro" id="IPR003599">
    <property type="entry name" value="Ig_sub"/>
</dbReference>
<dbReference type="InterPro" id="IPR003598">
    <property type="entry name" value="Ig_sub2"/>
</dbReference>
<dbReference type="InterPro" id="IPR051170">
    <property type="entry name" value="Neural/epithelial_adhesion"/>
</dbReference>
<dbReference type="PANTHER" id="PTHR12231">
    <property type="entry name" value="CTX-RELATED TYPE I TRANSMEMBRANE PROTEIN"/>
    <property type="match status" value="1"/>
</dbReference>
<dbReference type="PANTHER" id="PTHR12231:SF240">
    <property type="entry name" value="PROTEIN TURTLE HOMOLOG B"/>
    <property type="match status" value="1"/>
</dbReference>
<dbReference type="Pfam" id="PF00041">
    <property type="entry name" value="fn3"/>
    <property type="match status" value="2"/>
</dbReference>
<dbReference type="Pfam" id="PF13895">
    <property type="entry name" value="Ig_2"/>
    <property type="match status" value="1"/>
</dbReference>
<dbReference type="Pfam" id="PF13927">
    <property type="entry name" value="Ig_3"/>
    <property type="match status" value="3"/>
</dbReference>
<dbReference type="SMART" id="SM00060">
    <property type="entry name" value="FN3"/>
    <property type="match status" value="3"/>
</dbReference>
<dbReference type="SMART" id="SM00409">
    <property type="entry name" value="IG"/>
    <property type="match status" value="5"/>
</dbReference>
<dbReference type="SMART" id="SM00408">
    <property type="entry name" value="IGc2"/>
    <property type="match status" value="5"/>
</dbReference>
<dbReference type="SUPFAM" id="SSF49265">
    <property type="entry name" value="Fibronectin type III"/>
    <property type="match status" value="1"/>
</dbReference>
<dbReference type="SUPFAM" id="SSF48726">
    <property type="entry name" value="Immunoglobulin"/>
    <property type="match status" value="5"/>
</dbReference>
<dbReference type="PROSITE" id="PS50853">
    <property type="entry name" value="FN3"/>
    <property type="match status" value="2"/>
</dbReference>
<dbReference type="PROSITE" id="PS50835">
    <property type="entry name" value="IG_LIKE"/>
    <property type="match status" value="5"/>
</dbReference>
<feature type="signal peptide" evidence="2">
    <location>
        <begin position="1"/>
        <end position="20"/>
    </location>
</feature>
<feature type="chain" id="PRO_5003052708" description="Protein turtle homolog B">
    <location>
        <begin position="21"/>
        <end position="1328"/>
    </location>
</feature>
<feature type="topological domain" description="Extracellular" evidence="7">
    <location>
        <begin position="21"/>
        <end position="722"/>
    </location>
</feature>
<feature type="transmembrane region" description="Helical" evidence="2">
    <location>
        <begin position="723"/>
        <end position="743"/>
    </location>
</feature>
<feature type="topological domain" description="Cytoplasmic" evidence="7">
    <location>
        <begin position="744"/>
        <end position="1328"/>
    </location>
</feature>
<feature type="domain" description="Ig-like 1" evidence="3">
    <location>
        <begin position="30"/>
        <end position="115"/>
    </location>
</feature>
<feature type="domain" description="Ig-like 2" evidence="3">
    <location>
        <begin position="139"/>
        <end position="226"/>
    </location>
</feature>
<feature type="domain" description="Ig-like 3" evidence="3">
    <location>
        <begin position="228"/>
        <end position="320"/>
    </location>
</feature>
<feature type="domain" description="Ig-like 4" evidence="3">
    <location>
        <begin position="324"/>
        <end position="415"/>
    </location>
</feature>
<feature type="domain" description="Ig-like 5" evidence="3">
    <location>
        <begin position="420"/>
        <end position="504"/>
    </location>
</feature>
<feature type="domain" description="Fibronectin type-III 1" evidence="4">
    <location>
        <begin position="512"/>
        <end position="604"/>
    </location>
</feature>
<feature type="domain" description="Fibronectin type-III 2" evidence="4">
    <location>
        <begin position="614"/>
        <end position="708"/>
    </location>
</feature>
<feature type="region of interest" description="Disordered" evidence="5">
    <location>
        <begin position="758"/>
        <end position="817"/>
    </location>
</feature>
<feature type="region of interest" description="Disordered" evidence="5">
    <location>
        <begin position="914"/>
        <end position="1040"/>
    </location>
</feature>
<feature type="region of interest" description="Disordered" evidence="5">
    <location>
        <begin position="1107"/>
        <end position="1328"/>
    </location>
</feature>
<feature type="compositionally biased region" description="Low complexity" evidence="5">
    <location>
        <begin position="990"/>
        <end position="1001"/>
    </location>
</feature>
<feature type="compositionally biased region" description="Polar residues" evidence="5">
    <location>
        <begin position="1018"/>
        <end position="1033"/>
    </location>
</feature>
<feature type="compositionally biased region" description="Polar residues" evidence="5">
    <location>
        <begin position="1129"/>
        <end position="1141"/>
    </location>
</feature>
<feature type="compositionally biased region" description="Polar residues" evidence="5">
    <location>
        <begin position="1199"/>
        <end position="1214"/>
    </location>
</feature>
<feature type="compositionally biased region" description="Low complexity" evidence="5">
    <location>
        <begin position="1246"/>
        <end position="1273"/>
    </location>
</feature>
<feature type="compositionally biased region" description="Pro residues" evidence="5">
    <location>
        <begin position="1284"/>
        <end position="1295"/>
    </location>
</feature>
<feature type="compositionally biased region" description="Pro residues" evidence="5">
    <location>
        <begin position="1318"/>
        <end position="1328"/>
    </location>
</feature>
<feature type="modified residue" description="Phosphoserine" evidence="10">
    <location>
        <position position="775"/>
    </location>
</feature>
<feature type="modified residue" description="Phosphoserine" evidence="10">
    <location>
        <position position="783"/>
    </location>
</feature>
<feature type="modified residue" description="Phosphoserine" evidence="10">
    <location>
        <position position="794"/>
    </location>
</feature>
<feature type="modified residue" description="Omega-N-methylarginine" evidence="1">
    <location>
        <position position="1136"/>
    </location>
</feature>
<feature type="modified residue" description="Phosphoserine" evidence="10">
    <location>
        <position position="1207"/>
    </location>
</feature>
<feature type="modified residue" description="Phosphoserine" evidence="1">
    <location>
        <position position="1215"/>
    </location>
</feature>
<feature type="glycosylation site" description="N-linked (GlcNAc...) asparagine" evidence="2">
    <location>
        <position position="241"/>
    </location>
</feature>
<feature type="glycosylation site" description="N-linked (GlcNAc...) asparagine" evidence="2">
    <location>
        <position position="258"/>
    </location>
</feature>
<feature type="glycosylation site" description="N-linked (GlcNAc...) asparagine" evidence="2">
    <location>
        <position position="624"/>
    </location>
</feature>
<feature type="disulfide bond" evidence="3">
    <location>
        <begin position="45"/>
        <end position="113"/>
    </location>
</feature>
<feature type="disulfide bond" evidence="3">
    <location>
        <begin position="161"/>
        <end position="208"/>
    </location>
</feature>
<feature type="disulfide bond" evidence="3">
    <location>
        <begin position="250"/>
        <end position="303"/>
    </location>
</feature>
<feature type="disulfide bond" evidence="3">
    <location>
        <begin position="346"/>
        <end position="397"/>
    </location>
</feature>
<feature type="disulfide bond" evidence="3">
    <location>
        <begin position="442"/>
        <end position="488"/>
    </location>
</feature>
<organism evidence="8">
    <name type="scientific">Rattus norvegicus</name>
    <name type="common">Rat</name>
    <dbReference type="NCBI Taxonomy" id="10116"/>
    <lineage>
        <taxon>Eukaryota</taxon>
        <taxon>Metazoa</taxon>
        <taxon>Chordata</taxon>
        <taxon>Craniata</taxon>
        <taxon>Vertebrata</taxon>
        <taxon>Euteleostomi</taxon>
        <taxon>Mammalia</taxon>
        <taxon>Eutheria</taxon>
        <taxon>Euarchontoglires</taxon>
        <taxon>Glires</taxon>
        <taxon>Rodentia</taxon>
        <taxon>Myomorpha</taxon>
        <taxon>Muroidea</taxon>
        <taxon>Muridae</taxon>
        <taxon>Murinae</taxon>
        <taxon>Rattus</taxon>
    </lineage>
</organism>
<reference evidence="8" key="1">
    <citation type="journal article" date="2004" name="Nature">
        <title>Genome sequence of the Brown Norway rat yields insights into mammalian evolution.</title>
        <authorList>
            <person name="Gibbs R.A."/>
            <person name="Weinstock G.M."/>
            <person name="Metzker M.L."/>
            <person name="Muzny D.M."/>
            <person name="Sodergren E.J."/>
            <person name="Scherer S."/>
            <person name="Scott G."/>
            <person name="Steffen D."/>
            <person name="Worley K.C."/>
            <person name="Burch P.E."/>
            <person name="Okwuonu G."/>
            <person name="Hines S."/>
            <person name="Lewis L."/>
            <person name="Deramo C."/>
            <person name="Delgado O."/>
            <person name="Dugan-Rocha S."/>
            <person name="Miner G."/>
            <person name="Morgan M."/>
            <person name="Hawes A."/>
            <person name="Gill R."/>
            <person name="Holt R.A."/>
            <person name="Adams M.D."/>
            <person name="Amanatides P.G."/>
            <person name="Baden-Tillson H."/>
            <person name="Barnstead M."/>
            <person name="Chin S."/>
            <person name="Evans C.A."/>
            <person name="Ferriera S."/>
            <person name="Fosler C."/>
            <person name="Glodek A."/>
            <person name="Gu Z."/>
            <person name="Jennings D."/>
            <person name="Kraft C.L."/>
            <person name="Nguyen T."/>
            <person name="Pfannkoch C.M."/>
            <person name="Sitter C."/>
            <person name="Sutton G.G."/>
            <person name="Venter J.C."/>
            <person name="Woodage T."/>
            <person name="Smith D."/>
            <person name="Lee H.-M."/>
            <person name="Gustafson E."/>
            <person name="Cahill P."/>
            <person name="Kana A."/>
            <person name="Doucette-Stamm L."/>
            <person name="Weinstock K."/>
            <person name="Fechtel K."/>
            <person name="Weiss R.B."/>
            <person name="Dunn D.M."/>
            <person name="Green E.D."/>
            <person name="Blakesley R.W."/>
            <person name="Bouffard G.G."/>
            <person name="De Jong P.J."/>
            <person name="Osoegawa K."/>
            <person name="Zhu B."/>
            <person name="Marra M."/>
            <person name="Schein J."/>
            <person name="Bosdet I."/>
            <person name="Fjell C."/>
            <person name="Jones S."/>
            <person name="Krzywinski M."/>
            <person name="Mathewson C."/>
            <person name="Siddiqui A."/>
            <person name="Wye N."/>
            <person name="McPherson J."/>
            <person name="Zhao S."/>
            <person name="Fraser C.M."/>
            <person name="Shetty J."/>
            <person name="Shatsman S."/>
            <person name="Geer K."/>
            <person name="Chen Y."/>
            <person name="Abramzon S."/>
            <person name="Nierman W.C."/>
            <person name="Havlak P.H."/>
            <person name="Chen R."/>
            <person name="Durbin K.J."/>
            <person name="Egan A."/>
            <person name="Ren Y."/>
            <person name="Song X.-Z."/>
            <person name="Li B."/>
            <person name="Liu Y."/>
            <person name="Qin X."/>
            <person name="Cawley S."/>
            <person name="Cooney A.J."/>
            <person name="D'Souza L.M."/>
            <person name="Martin K."/>
            <person name="Wu J.Q."/>
            <person name="Gonzalez-Garay M.L."/>
            <person name="Jackson A.R."/>
            <person name="Kalafus K.J."/>
            <person name="McLeod M.P."/>
            <person name="Milosavljevic A."/>
            <person name="Virk D."/>
            <person name="Volkov A."/>
            <person name="Wheeler D.A."/>
            <person name="Zhang Z."/>
            <person name="Bailey J.A."/>
            <person name="Eichler E.E."/>
            <person name="Tuzun E."/>
            <person name="Birney E."/>
            <person name="Mongin E."/>
            <person name="Ureta-Vidal A."/>
            <person name="Woodwark C."/>
            <person name="Zdobnov E."/>
            <person name="Bork P."/>
            <person name="Suyama M."/>
            <person name="Torrents D."/>
            <person name="Alexandersson M."/>
            <person name="Trask B.J."/>
            <person name="Young J.M."/>
            <person name="Huang H."/>
            <person name="Wang H."/>
            <person name="Xing H."/>
            <person name="Daniels S."/>
            <person name="Gietzen D."/>
            <person name="Schmidt J."/>
            <person name="Stevens K."/>
            <person name="Vitt U."/>
            <person name="Wingrove J."/>
            <person name="Camara F."/>
            <person name="Mar Alba M."/>
            <person name="Abril J.F."/>
            <person name="Guigo R."/>
            <person name="Smit A."/>
            <person name="Dubchak I."/>
            <person name="Rubin E.M."/>
            <person name="Couronne O."/>
            <person name="Poliakov A."/>
            <person name="Huebner N."/>
            <person name="Ganten D."/>
            <person name="Goesele C."/>
            <person name="Hummel O."/>
            <person name="Kreitler T."/>
            <person name="Lee Y.-A."/>
            <person name="Monti J."/>
            <person name="Schulz H."/>
            <person name="Zimdahl H."/>
            <person name="Himmelbauer H."/>
            <person name="Lehrach H."/>
            <person name="Jacob H.J."/>
            <person name="Bromberg S."/>
            <person name="Gullings-Handley J."/>
            <person name="Jensen-Seaman M.I."/>
            <person name="Kwitek A.E."/>
            <person name="Lazar J."/>
            <person name="Pasko D."/>
            <person name="Tonellato P.J."/>
            <person name="Twigger S."/>
            <person name="Ponting C.P."/>
            <person name="Duarte J.M."/>
            <person name="Rice S."/>
            <person name="Goodstadt L."/>
            <person name="Beatson S.A."/>
            <person name="Emes R.D."/>
            <person name="Winter E.E."/>
            <person name="Webber C."/>
            <person name="Brandt P."/>
            <person name="Nyakatura G."/>
            <person name="Adetobi M."/>
            <person name="Chiaromonte F."/>
            <person name="Elnitski L."/>
            <person name="Eswara P."/>
            <person name="Hardison R.C."/>
            <person name="Hou M."/>
            <person name="Kolbe D."/>
            <person name="Makova K."/>
            <person name="Miller W."/>
            <person name="Nekrutenko A."/>
            <person name="Riemer C."/>
            <person name="Schwartz S."/>
            <person name="Taylor J."/>
            <person name="Yang S."/>
            <person name="Zhang Y."/>
            <person name="Lindpaintner K."/>
            <person name="Andrews T.D."/>
            <person name="Caccamo M."/>
            <person name="Clamp M."/>
            <person name="Clarke L."/>
            <person name="Curwen V."/>
            <person name="Durbin R.M."/>
            <person name="Eyras E."/>
            <person name="Searle S.M."/>
            <person name="Cooper G.M."/>
            <person name="Batzoglou S."/>
            <person name="Brudno M."/>
            <person name="Sidow A."/>
            <person name="Stone E.A."/>
            <person name="Payseur B.A."/>
            <person name="Bourque G."/>
            <person name="Lopez-Otin C."/>
            <person name="Puente X.S."/>
            <person name="Chakrabarti K."/>
            <person name="Chatterji S."/>
            <person name="Dewey C."/>
            <person name="Pachter L."/>
            <person name="Bray N."/>
            <person name="Yap V.B."/>
            <person name="Caspi A."/>
            <person name="Tesler G."/>
            <person name="Pevzner P.A."/>
            <person name="Haussler D."/>
            <person name="Roskin K.M."/>
            <person name="Baertsch R."/>
            <person name="Clawson H."/>
            <person name="Furey T.S."/>
            <person name="Hinrichs A.S."/>
            <person name="Karolchik D."/>
            <person name="Kent W.J."/>
            <person name="Rosenbloom K.R."/>
            <person name="Trumbower H."/>
            <person name="Weirauch M."/>
            <person name="Cooper D.N."/>
            <person name="Stenson P.D."/>
            <person name="Ma B."/>
            <person name="Brent M."/>
            <person name="Arumugam M."/>
            <person name="Shteynberg D."/>
            <person name="Copley R.R."/>
            <person name="Taylor M.S."/>
            <person name="Riethman H."/>
            <person name="Mudunuri U."/>
            <person name="Peterson J."/>
            <person name="Guyer M."/>
            <person name="Felsenfeld A."/>
            <person name="Old S."/>
            <person name="Mockrin S."/>
            <person name="Collins F.S."/>
        </authorList>
    </citation>
    <scope>NUCLEOTIDE SEQUENCE [LARGE SCALE GENOMIC DNA]</scope>
    <source>
        <strain evidence="8">Brown Norway</strain>
    </source>
</reference>
<reference key="2">
    <citation type="journal article" date="2012" name="Nat. Commun.">
        <title>Quantitative maps of protein phosphorylation sites across 14 different rat organs and tissues.</title>
        <authorList>
            <person name="Lundby A."/>
            <person name="Secher A."/>
            <person name="Lage K."/>
            <person name="Nordsborg N.B."/>
            <person name="Dmytriyev A."/>
            <person name="Lundby C."/>
            <person name="Olsen J.V."/>
        </authorList>
    </citation>
    <scope>PHOSPHORYLATION [LARGE SCALE ANALYSIS] AT SER-775; SER-783; SER-794 AND SER-1207</scope>
    <scope>IDENTIFICATION BY MASS SPECTROMETRY [LARGE SCALE ANALYSIS]</scope>
</reference>
<reference evidence="7" key="3">
    <citation type="journal article" date="2013" name="J. Cell Biol.">
        <title>The adhesion protein IgSF9b is coupled to neuroligin 2 via S-SCAM to promote inhibitory synapse development.</title>
        <authorList>
            <person name="Woo J."/>
            <person name="Kwon S.K."/>
            <person name="Nam J."/>
            <person name="Choi S."/>
            <person name="Takahashi H."/>
            <person name="Krueger D."/>
            <person name="Park J."/>
            <person name="Lee Y."/>
            <person name="Bae J.Y."/>
            <person name="Lee D."/>
            <person name="Ko J."/>
            <person name="Kim H."/>
            <person name="Kim M.H."/>
            <person name="Bae Y.C."/>
            <person name="Chang S."/>
            <person name="Craig A.M."/>
            <person name="Kim E."/>
        </authorList>
    </citation>
    <scope>FUNCTION</scope>
    <scope>IDENTIFICATION IN A COMPLEX WITH MAGI2 AND NLGN2</scope>
    <scope>SUBCELLULAR LOCATION</scope>
    <scope>TISSUE SPECIFICITY</scope>
    <scope>DEVELOPMENTAL STAGE</scope>
    <scope>GLYCOSYLATION</scope>
</reference>
<accession>D3ZB51</accession>
<keyword id="KW-0130">Cell adhesion</keyword>
<keyword id="KW-1003">Cell membrane</keyword>
<keyword id="KW-1015">Disulfide bond</keyword>
<keyword id="KW-0325">Glycoprotein</keyword>
<keyword id="KW-0393">Immunoglobulin domain</keyword>
<keyword id="KW-0472">Membrane</keyword>
<keyword id="KW-0488">Methylation</keyword>
<keyword id="KW-0524">Neurogenesis</keyword>
<keyword id="KW-0597">Phosphoprotein</keyword>
<keyword id="KW-0628">Postsynaptic cell membrane</keyword>
<keyword id="KW-1185">Reference proteome</keyword>
<keyword id="KW-0677">Repeat</keyword>
<keyword id="KW-0732">Signal</keyword>
<keyword id="KW-0770">Synapse</keyword>
<keyword id="KW-0812">Transmembrane</keyword>
<keyword id="KW-1133">Transmembrane helix</keyword>
<sequence length="1328" mass="145079">MIWYVATLIASVISTRGLVAQVAHGLREEPEFVTARAGEGVVLRCDVIHPVTGQPPPYVVEWFKFGVPIPIFIKFGYYPPHVDPEYAGRASLHDKASLRLEQVRSEDQGWYECKVLMLDQQYDTFHNGSWVHLTINAPPTFTETPPQYIEAKEGGSITMTCTAFGNPKPIVTWLKEGTLLSASGKYQVSDGSLTVTSVSREDRGAYTCRAYSIQGEAVHTTHLLVQGPPFIVSPPENITVNISQDALLTCRAEAYPGNLTYTWYWQDENVYFQNDLKLRVRILIDGTLIIFRVKPEDAGKYTCVPSNSLGRSPSASAYLTVQYPARVLNMPPVIYVPVGIHGYIRCPVDAEPPATVVKWNKDGRPLQVEKNLGWTLMEDGSIRIEEATEEALGTYTCVPYNTLGTMGQSAPARLVLKDPPYFTVLPGWEYRQEAGRELLIPCAAAGDPFPVITWRKVGKPSRSKHNALPSGSLQFRALSKEDHGEWECVATNVVTSITASTHLTVIGTSPHAPGSVRVHVSMTTANVSWEPGYDGGYEQTFSVWMKRAQFGPHDWLSLSVPLGPSWLLVDSLEPETAYQFSVLAQNRLGTSAFSEVVTVNTLAFPVTTPEPLVLVTPPRCLTANRTQQGVLLSWLPPANHSFPIDRYIMEFRVGERWEMLDDAIPGTDGEFFAKDLSQDTWYEFRVLAVMQDLISEPSNIAGVSSTDIFPQPDLTDDGLARPVLAGIVATICFLAAAILFSTLAACFVNKQRKRKLKRKKDPPLSITHCRKSLESPLSSGKVSPESIRTLRAPSESSDDQGQPAAKRMLSPTREKELSLYKKTKRAISSRKYSVAKAEAEAEATTPIELISRGPDGRFVMGPSEMEPSVKGRRIEGFPFAEETDMYPEFRQSDEENEDPLVPTSVAALKPQLTPMSSSQDSYLPPPAYSPRFQPRGLEGPSGLGGRLQATGQARPPAPRPFQHGQYYGYLSSSSPGEVEPPPFYMPEVGSPLSSVMSSPPLHTEGPFGHPTIPEENGENASNSTLPLTQTPTGGRSPEPWGRPEFPFGGLETPAMMFPHQLHPCDVAESLQPKPCLPRGLPPAPLQVPAAYPGMLSLEAPKGWVGKSPGRGPIPAPPATKWQERPMQPLVSQGQLRHTSQGMGIPVLPYPEPAEPGGHGGPSTFGLDTRWYEPQPRPRPSPRQARRAEPSLHQVVLQPSRLSPLTQSPLSSRTGSPELAARARPRPGLLQQAEMSEITLQPPAAVSFSRKSTPSSTGSPSQSSRSGSPSYRPTMGFTTLATGYPSPPPGPAPPAPGDNLDVFGQTPSPRRMGEEPLRPEPPTTLPTSG</sequence>
<evidence type="ECO:0000250" key="1">
    <source>
        <dbReference type="UniProtKB" id="E9PZ19"/>
    </source>
</evidence>
<evidence type="ECO:0000255" key="2"/>
<evidence type="ECO:0000255" key="3">
    <source>
        <dbReference type="PROSITE-ProRule" id="PRU00114"/>
    </source>
</evidence>
<evidence type="ECO:0000255" key="4">
    <source>
        <dbReference type="PROSITE-ProRule" id="PRU00316"/>
    </source>
</evidence>
<evidence type="ECO:0000256" key="5">
    <source>
        <dbReference type="SAM" id="MobiDB-lite"/>
    </source>
</evidence>
<evidence type="ECO:0000269" key="6">
    <source>
    </source>
</evidence>
<evidence type="ECO:0000305" key="7"/>
<evidence type="ECO:0000312" key="8">
    <source>
        <dbReference type="Proteomes" id="UP000002494"/>
    </source>
</evidence>
<evidence type="ECO:0000312" key="9">
    <source>
        <dbReference type="RGD" id="1564717"/>
    </source>
</evidence>
<evidence type="ECO:0007744" key="10">
    <source>
    </source>
</evidence>
<protein>
    <recommendedName>
        <fullName>Protein turtle homolog B</fullName>
    </recommendedName>
    <alternativeName>
        <fullName evidence="9">Immunoglobulin superfamily member 9B</fullName>
    </alternativeName>
</protein>